<accession>B3R7S9</accession>
<comment type="function">
    <text evidence="1">Involved in the binding of tRNA to the ribosomes.</text>
</comment>
<comment type="subunit">
    <text evidence="1">Part of the 30S ribosomal subunit.</text>
</comment>
<comment type="similarity">
    <text evidence="1">Belongs to the universal ribosomal protein uS10 family.</text>
</comment>
<name>RS10_CUPTR</name>
<reference key="1">
    <citation type="journal article" date="2008" name="Genome Res.">
        <title>Genome sequence of the beta-rhizobium Cupriavidus taiwanensis and comparative genomics of rhizobia.</title>
        <authorList>
            <person name="Amadou C."/>
            <person name="Pascal G."/>
            <person name="Mangenot S."/>
            <person name="Glew M."/>
            <person name="Bontemps C."/>
            <person name="Capela D."/>
            <person name="Carrere S."/>
            <person name="Cruveiller S."/>
            <person name="Dossat C."/>
            <person name="Lajus A."/>
            <person name="Marchetti M."/>
            <person name="Poinsot V."/>
            <person name="Rouy Z."/>
            <person name="Servin B."/>
            <person name="Saad M."/>
            <person name="Schenowitz C."/>
            <person name="Barbe V."/>
            <person name="Batut J."/>
            <person name="Medigue C."/>
            <person name="Masson-Boivin C."/>
        </authorList>
    </citation>
    <scope>NUCLEOTIDE SEQUENCE [LARGE SCALE GENOMIC DNA]</scope>
    <source>
        <strain>DSM 17343 / BCRC 17206 / CCUG 44338 / CIP 107171 / LMG 19424 / R1</strain>
    </source>
</reference>
<sequence length="102" mass="11678">MQNQKIRIRLKAFDYRLIDQSAAEIVDTAKRTGAIVKGPVPLPTRIQRFDILRSPHVNKTSRDQFEIRTHQRLMDIVDPTDKTVDALMKLDLPAGVDVEIKV</sequence>
<gene>
    <name evidence="1" type="primary">rpsJ</name>
    <name type="ordered locus">RALTA_A2951</name>
</gene>
<keyword id="KW-0687">Ribonucleoprotein</keyword>
<keyword id="KW-0689">Ribosomal protein</keyword>
<evidence type="ECO:0000255" key="1">
    <source>
        <dbReference type="HAMAP-Rule" id="MF_00508"/>
    </source>
</evidence>
<evidence type="ECO:0000305" key="2"/>
<feature type="chain" id="PRO_1000127110" description="Small ribosomal subunit protein uS10">
    <location>
        <begin position="1"/>
        <end position="102"/>
    </location>
</feature>
<organism>
    <name type="scientific">Cupriavidus taiwanensis (strain DSM 17343 / BCRC 17206 / CCUG 44338 / CIP 107171 / LMG 19424 / R1)</name>
    <name type="common">Ralstonia taiwanensis (strain LMG 19424)</name>
    <dbReference type="NCBI Taxonomy" id="977880"/>
    <lineage>
        <taxon>Bacteria</taxon>
        <taxon>Pseudomonadati</taxon>
        <taxon>Pseudomonadota</taxon>
        <taxon>Betaproteobacteria</taxon>
        <taxon>Burkholderiales</taxon>
        <taxon>Burkholderiaceae</taxon>
        <taxon>Cupriavidus</taxon>
    </lineage>
</organism>
<proteinExistence type="inferred from homology"/>
<protein>
    <recommendedName>
        <fullName evidence="1">Small ribosomal subunit protein uS10</fullName>
    </recommendedName>
    <alternativeName>
        <fullName evidence="2">30S ribosomal protein S10</fullName>
    </alternativeName>
</protein>
<dbReference type="EMBL" id="CU633749">
    <property type="protein sequence ID" value="CAQ70874.1"/>
    <property type="molecule type" value="Genomic_DNA"/>
</dbReference>
<dbReference type="RefSeq" id="WP_006160488.1">
    <property type="nucleotide sequence ID" value="NC_010528.1"/>
</dbReference>
<dbReference type="SMR" id="B3R7S9"/>
<dbReference type="GeneID" id="98403017"/>
<dbReference type="KEGG" id="cti:RALTA_A2951"/>
<dbReference type="eggNOG" id="COG0051">
    <property type="taxonomic scope" value="Bacteria"/>
</dbReference>
<dbReference type="HOGENOM" id="CLU_122625_1_3_4"/>
<dbReference type="BioCyc" id="CTAI977880:RALTA_RS14385-MONOMER"/>
<dbReference type="Proteomes" id="UP000001692">
    <property type="component" value="Chromosome 1"/>
</dbReference>
<dbReference type="GO" id="GO:1990904">
    <property type="term" value="C:ribonucleoprotein complex"/>
    <property type="evidence" value="ECO:0007669"/>
    <property type="project" value="UniProtKB-KW"/>
</dbReference>
<dbReference type="GO" id="GO:0005840">
    <property type="term" value="C:ribosome"/>
    <property type="evidence" value="ECO:0007669"/>
    <property type="project" value="UniProtKB-KW"/>
</dbReference>
<dbReference type="GO" id="GO:0003735">
    <property type="term" value="F:structural constituent of ribosome"/>
    <property type="evidence" value="ECO:0007669"/>
    <property type="project" value="InterPro"/>
</dbReference>
<dbReference type="GO" id="GO:0000049">
    <property type="term" value="F:tRNA binding"/>
    <property type="evidence" value="ECO:0007669"/>
    <property type="project" value="UniProtKB-UniRule"/>
</dbReference>
<dbReference type="GO" id="GO:0006412">
    <property type="term" value="P:translation"/>
    <property type="evidence" value="ECO:0007669"/>
    <property type="project" value="UniProtKB-UniRule"/>
</dbReference>
<dbReference type="FunFam" id="3.30.70.600:FF:000001">
    <property type="entry name" value="30S ribosomal protein S10"/>
    <property type="match status" value="1"/>
</dbReference>
<dbReference type="Gene3D" id="3.30.70.600">
    <property type="entry name" value="Ribosomal protein S10 domain"/>
    <property type="match status" value="1"/>
</dbReference>
<dbReference type="HAMAP" id="MF_00508">
    <property type="entry name" value="Ribosomal_uS10"/>
    <property type="match status" value="1"/>
</dbReference>
<dbReference type="InterPro" id="IPR001848">
    <property type="entry name" value="Ribosomal_uS10"/>
</dbReference>
<dbReference type="InterPro" id="IPR018268">
    <property type="entry name" value="Ribosomal_uS10_CS"/>
</dbReference>
<dbReference type="InterPro" id="IPR027486">
    <property type="entry name" value="Ribosomal_uS10_dom"/>
</dbReference>
<dbReference type="InterPro" id="IPR036838">
    <property type="entry name" value="Ribosomal_uS10_dom_sf"/>
</dbReference>
<dbReference type="NCBIfam" id="NF001861">
    <property type="entry name" value="PRK00596.1"/>
    <property type="match status" value="1"/>
</dbReference>
<dbReference type="NCBIfam" id="TIGR01049">
    <property type="entry name" value="rpsJ_bact"/>
    <property type="match status" value="1"/>
</dbReference>
<dbReference type="PANTHER" id="PTHR11700">
    <property type="entry name" value="30S RIBOSOMAL PROTEIN S10 FAMILY MEMBER"/>
    <property type="match status" value="1"/>
</dbReference>
<dbReference type="Pfam" id="PF00338">
    <property type="entry name" value="Ribosomal_S10"/>
    <property type="match status" value="1"/>
</dbReference>
<dbReference type="PRINTS" id="PR00971">
    <property type="entry name" value="RIBOSOMALS10"/>
</dbReference>
<dbReference type="SMART" id="SM01403">
    <property type="entry name" value="Ribosomal_S10"/>
    <property type="match status" value="1"/>
</dbReference>
<dbReference type="SUPFAM" id="SSF54999">
    <property type="entry name" value="Ribosomal protein S10"/>
    <property type="match status" value="1"/>
</dbReference>
<dbReference type="PROSITE" id="PS00361">
    <property type="entry name" value="RIBOSOMAL_S10"/>
    <property type="match status" value="1"/>
</dbReference>